<feature type="chain" id="PRO_0000183985" description="Synaptotagmin-C">
    <location>
        <begin position="1"/>
        <end position="537"/>
    </location>
</feature>
<feature type="topological domain" description="Vesicular" evidence="2">
    <location>
        <begin position="1"/>
        <end position="52"/>
    </location>
</feature>
<feature type="transmembrane region" description="Helical" evidence="2">
    <location>
        <begin position="53"/>
        <end position="78"/>
    </location>
</feature>
<feature type="topological domain" description="Cytoplasmic" evidence="2">
    <location>
        <begin position="79"/>
        <end position="537"/>
    </location>
</feature>
<feature type="domain" description="C2 1" evidence="3">
    <location>
        <begin position="236"/>
        <end position="357"/>
    </location>
</feature>
<feature type="domain" description="C2 2" evidence="3">
    <location>
        <begin position="368"/>
        <end position="501"/>
    </location>
</feature>
<feature type="region of interest" description="Disordered" evidence="4">
    <location>
        <begin position="92"/>
        <end position="111"/>
    </location>
</feature>
<feature type="region of interest" description="Disordered" evidence="4">
    <location>
        <begin position="142"/>
        <end position="200"/>
    </location>
</feature>
<feature type="region of interest" description="Phospholipid binding" evidence="5">
    <location>
        <begin position="228"/>
        <end position="477"/>
    </location>
</feature>
<feature type="compositionally biased region" description="Basic residues" evidence="4">
    <location>
        <begin position="100"/>
        <end position="110"/>
    </location>
</feature>
<feature type="compositionally biased region" description="Polar residues" evidence="4">
    <location>
        <begin position="143"/>
        <end position="174"/>
    </location>
</feature>
<feature type="binding site" evidence="3">
    <location>
        <position position="267"/>
    </location>
    <ligand>
        <name>Ca(2+)</name>
        <dbReference type="ChEBI" id="CHEBI:29108"/>
        <label>1</label>
    </ligand>
</feature>
<feature type="binding site" evidence="3">
    <location>
        <position position="267"/>
    </location>
    <ligand>
        <name>Ca(2+)</name>
        <dbReference type="ChEBI" id="CHEBI:29108"/>
        <label>2</label>
    </ligand>
</feature>
<feature type="binding site" evidence="3">
    <location>
        <position position="273"/>
    </location>
    <ligand>
        <name>Ca(2+)</name>
        <dbReference type="ChEBI" id="CHEBI:29108"/>
        <label>1</label>
    </ligand>
</feature>
<feature type="binding site" evidence="3">
    <location>
        <position position="325"/>
    </location>
    <ligand>
        <name>Ca(2+)</name>
        <dbReference type="ChEBI" id="CHEBI:29108"/>
        <label>1</label>
    </ligand>
</feature>
<feature type="binding site" evidence="3">
    <location>
        <position position="325"/>
    </location>
    <ligand>
        <name>Ca(2+)</name>
        <dbReference type="ChEBI" id="CHEBI:29108"/>
        <label>2</label>
    </ligand>
</feature>
<feature type="binding site" evidence="3">
    <location>
        <position position="326"/>
    </location>
    <ligand>
        <name>Ca(2+)</name>
        <dbReference type="ChEBI" id="CHEBI:29108"/>
        <label>1</label>
    </ligand>
</feature>
<feature type="binding site" evidence="3">
    <location>
        <position position="327"/>
    </location>
    <ligand>
        <name>Ca(2+)</name>
        <dbReference type="ChEBI" id="CHEBI:29108"/>
        <label>1</label>
    </ligand>
</feature>
<feature type="binding site" evidence="3">
    <location>
        <position position="327"/>
    </location>
    <ligand>
        <name>Ca(2+)</name>
        <dbReference type="ChEBI" id="CHEBI:29108"/>
        <label>2</label>
    </ligand>
</feature>
<feature type="binding site" evidence="3">
    <location>
        <position position="327"/>
    </location>
    <ligand>
        <name>Ca(2+)</name>
        <dbReference type="ChEBI" id="CHEBI:29108"/>
        <label>3</label>
    </ligand>
</feature>
<feature type="binding site" evidence="3">
    <location>
        <position position="330"/>
    </location>
    <ligand>
        <name>Ca(2+)</name>
        <dbReference type="ChEBI" id="CHEBI:29108"/>
        <label>3</label>
    </ligand>
</feature>
<feature type="binding site" evidence="3">
    <location>
        <position position="333"/>
    </location>
    <ligand>
        <name>Ca(2+)</name>
        <dbReference type="ChEBI" id="CHEBI:29108"/>
        <label>2</label>
    </ligand>
</feature>
<feature type="binding site" evidence="3">
    <location>
        <position position="333"/>
    </location>
    <ligand>
        <name>Ca(2+)</name>
        <dbReference type="ChEBI" id="CHEBI:29108"/>
        <label>3</label>
    </ligand>
</feature>
<feature type="binding site" evidence="3">
    <location>
        <position position="399"/>
    </location>
    <ligand>
        <name>Ca(2+)</name>
        <dbReference type="ChEBI" id="CHEBI:29108"/>
        <label>4</label>
    </ligand>
</feature>
<feature type="binding site" evidence="3">
    <location>
        <position position="405"/>
    </location>
    <ligand>
        <name>Ca(2+)</name>
        <dbReference type="ChEBI" id="CHEBI:29108"/>
        <label>4</label>
    </ligand>
</feature>
<feature type="binding site" evidence="3">
    <location>
        <position position="459"/>
    </location>
    <ligand>
        <name>Ca(2+)</name>
        <dbReference type="ChEBI" id="CHEBI:29108"/>
        <label>4</label>
    </ligand>
</feature>
<feature type="binding site" evidence="3">
    <location>
        <position position="461"/>
    </location>
    <ligand>
        <name>Ca(2+)</name>
        <dbReference type="ChEBI" id="CHEBI:29108"/>
        <label>4</label>
    </ligand>
</feature>
<evidence type="ECO:0000250" key="1"/>
<evidence type="ECO:0000255" key="2"/>
<evidence type="ECO:0000255" key="3">
    <source>
        <dbReference type="PROSITE-ProRule" id="PRU00041"/>
    </source>
</evidence>
<evidence type="ECO:0000256" key="4">
    <source>
        <dbReference type="SAM" id="MobiDB-lite"/>
    </source>
</evidence>
<evidence type="ECO:0000305" key="5"/>
<name>SY63_DIPOM</name>
<gene>
    <name type="primary">P65-C</name>
</gene>
<comment type="function">
    <text>May have a regulatory role in the membrane interactions during trafficking of synaptic vesicles at the active zone of the synapse. It binds acidic phospholipids with a specificity that requires the presence of both an acidic head group and a diacyl backbone.</text>
</comment>
<comment type="cofactor">
    <cofactor evidence="3">
        <name>Ca(2+)</name>
        <dbReference type="ChEBI" id="CHEBI:29108"/>
    </cofactor>
    <text evidence="1">Binds 3 Ca(2+) ions per subunit. The ions are bound to the C2 domains.</text>
</comment>
<comment type="subunit">
    <text>Homodimer or homotrimer (possible).</text>
</comment>
<comment type="subcellular location">
    <subcellularLocation>
        <location>Cytoplasmic vesicle</location>
        <location>Secretory vesicle</location>
        <location>Synaptic vesicle membrane</location>
        <topology>Single-pass membrane protein</topology>
    </subcellularLocation>
    <subcellularLocation>
        <location>Synapse</location>
    </subcellularLocation>
    <text>Synaptic vesicles in neurons.</text>
</comment>
<comment type="similarity">
    <text evidence="5">Belongs to the synaptotagmin family.</text>
</comment>
<dbReference type="EMBL" id="M64277">
    <property type="protein sequence ID" value="AAA49229.1"/>
    <property type="molecule type" value="mRNA"/>
</dbReference>
<dbReference type="PIR" id="JH0415">
    <property type="entry name" value="JH0415"/>
</dbReference>
<dbReference type="SMR" id="P24507"/>
<dbReference type="GO" id="GO:0005886">
    <property type="term" value="C:plasma membrane"/>
    <property type="evidence" value="ECO:0007669"/>
    <property type="project" value="TreeGrafter"/>
</dbReference>
<dbReference type="GO" id="GO:0030672">
    <property type="term" value="C:synaptic vesicle membrane"/>
    <property type="evidence" value="ECO:0007669"/>
    <property type="project" value="UniProtKB-SubCell"/>
</dbReference>
<dbReference type="GO" id="GO:0005509">
    <property type="term" value="F:calcium ion binding"/>
    <property type="evidence" value="ECO:0007669"/>
    <property type="project" value="TreeGrafter"/>
</dbReference>
<dbReference type="GO" id="GO:0005544">
    <property type="term" value="F:calcium-dependent phospholipid binding"/>
    <property type="evidence" value="ECO:0007669"/>
    <property type="project" value="TreeGrafter"/>
</dbReference>
<dbReference type="GO" id="GO:0030276">
    <property type="term" value="F:clathrin binding"/>
    <property type="evidence" value="ECO:0007669"/>
    <property type="project" value="TreeGrafter"/>
</dbReference>
<dbReference type="GO" id="GO:0001786">
    <property type="term" value="F:phosphatidylserine binding"/>
    <property type="evidence" value="ECO:0007669"/>
    <property type="project" value="TreeGrafter"/>
</dbReference>
<dbReference type="GO" id="GO:0000149">
    <property type="term" value="F:SNARE binding"/>
    <property type="evidence" value="ECO:0007669"/>
    <property type="project" value="TreeGrafter"/>
</dbReference>
<dbReference type="GO" id="GO:0017156">
    <property type="term" value="P:calcium-ion regulated exocytosis"/>
    <property type="evidence" value="ECO:0007669"/>
    <property type="project" value="TreeGrafter"/>
</dbReference>
<dbReference type="CDD" id="cd08385">
    <property type="entry name" value="C2A_Synaptotagmin-1-5-6-9-10"/>
    <property type="match status" value="1"/>
</dbReference>
<dbReference type="CDD" id="cd08403">
    <property type="entry name" value="C2B_Synaptotagmin-3-5-6-9-10"/>
    <property type="match status" value="1"/>
</dbReference>
<dbReference type="FunFam" id="2.60.40.150:FF:000005">
    <property type="entry name" value="Synaptotagmin 6"/>
    <property type="match status" value="1"/>
</dbReference>
<dbReference type="FunFam" id="2.60.40.150:FF:000011">
    <property type="entry name" value="Synaptotagmin 6"/>
    <property type="match status" value="1"/>
</dbReference>
<dbReference type="Gene3D" id="2.60.40.150">
    <property type="entry name" value="C2 domain"/>
    <property type="match status" value="2"/>
</dbReference>
<dbReference type="InterPro" id="IPR000008">
    <property type="entry name" value="C2_dom"/>
</dbReference>
<dbReference type="InterPro" id="IPR035892">
    <property type="entry name" value="C2_domain_sf"/>
</dbReference>
<dbReference type="InterPro" id="IPR001565">
    <property type="entry name" value="Synaptotagmin"/>
</dbReference>
<dbReference type="PANTHER" id="PTHR10024">
    <property type="entry name" value="SYNAPTOTAGMIN"/>
    <property type="match status" value="1"/>
</dbReference>
<dbReference type="PANTHER" id="PTHR10024:SF176">
    <property type="entry name" value="SYNAPTOTAGMIN-3"/>
    <property type="match status" value="1"/>
</dbReference>
<dbReference type="Pfam" id="PF00168">
    <property type="entry name" value="C2"/>
    <property type="match status" value="2"/>
</dbReference>
<dbReference type="PRINTS" id="PR00360">
    <property type="entry name" value="C2DOMAIN"/>
</dbReference>
<dbReference type="PRINTS" id="PR00399">
    <property type="entry name" value="SYNAPTOTAGMN"/>
</dbReference>
<dbReference type="SMART" id="SM00239">
    <property type="entry name" value="C2"/>
    <property type="match status" value="2"/>
</dbReference>
<dbReference type="SUPFAM" id="SSF49562">
    <property type="entry name" value="C2 domain (Calcium/lipid-binding domain, CaLB)"/>
    <property type="match status" value="2"/>
</dbReference>
<dbReference type="PROSITE" id="PS50004">
    <property type="entry name" value="C2"/>
    <property type="match status" value="2"/>
</dbReference>
<reference key="1">
    <citation type="journal article" date="1991" name="Neuron">
        <title>Differential expression of the p65 gene family.</title>
        <authorList>
            <person name="Wendland B."/>
            <person name="Miller K.G."/>
            <person name="Schilling J."/>
            <person name="Scheller R.H."/>
        </authorList>
    </citation>
    <scope>NUCLEOTIDE SEQUENCE [MRNA]</scope>
</reference>
<organism>
    <name type="scientific">Diplobatis ommata</name>
    <name type="common">Ocellated electric ray</name>
    <name type="synonym">Discopyge ommata</name>
    <dbReference type="NCBI Taxonomy" id="1870830"/>
    <lineage>
        <taxon>Eukaryota</taxon>
        <taxon>Metazoa</taxon>
        <taxon>Chordata</taxon>
        <taxon>Craniata</taxon>
        <taxon>Vertebrata</taxon>
        <taxon>Chondrichthyes</taxon>
        <taxon>Elasmobranchii</taxon>
        <taxon>Batoidea</taxon>
        <taxon>Torpediniformes</taxon>
        <taxon>Narcinidae</taxon>
        <taxon>Diplobatis</taxon>
    </lineage>
</organism>
<keyword id="KW-0106">Calcium</keyword>
<keyword id="KW-0968">Cytoplasmic vesicle</keyword>
<keyword id="KW-0472">Membrane</keyword>
<keyword id="KW-0479">Metal-binding</keyword>
<keyword id="KW-0677">Repeat</keyword>
<keyword id="KW-0770">Synapse</keyword>
<keyword id="KW-0812">Transmembrane</keyword>
<keyword id="KW-1133">Transmembrane helix</keyword>
<accession>P24507</accession>
<protein>
    <recommendedName>
        <fullName>Synaptotagmin-C</fullName>
    </recommendedName>
    <alternativeName>
        <fullName>Synaptic vesicle protein O-p65-C</fullName>
    </alternativeName>
</protein>
<proteinExistence type="evidence at transcript level"/>
<sequence length="537" mass="61301">MSGDGEDELCRNALALVNELCFSVRGNHNNEKCIEFSYLLRDRDRTRHIETDISVSLLSVIVTFCGIVLLGVSLFVSWKLCWIPWRDKGLNPQRRDSQHHPHQHLHHHHSHFTDLTVERVDCGPEMPERSYLDLESYPESGIKLSQTSPDIPVDTSSGSKENNIPNAHSQQQVSAPPPATRFNSLPRPIPQQLSSPEFGTQADEKVEQVTSIGQIKPELYKQRSIDTEAKKHQKVNCGRINFMLRYTYTTEQLVVKILKALDLPAKDANGFSDPYVKIYLLPDRKKKFQTKVHRKTLNPIFNETFQFNVPFNELQNRKLHFSVYDFDRFSRHDLIGQVVLDNLLEFSDFSEDTTIWRDILEATSEKADLGEINFSLCYLPTAGRLTITIIKATNLKAMDLTGFSDPYVKASLICDERRLKKRKTSIKKNTLNPVYNEALVFDIPNENMEHVNVIIAVMDYDCIGHNEVIGMCRVGNATDGPGREHWNEMLANPRKPIEQWHQLIEEKVMNSYMTKSFAAGTGATKPVTIVVESPHSV</sequence>